<feature type="chain" id="PRO_0000330199" description="Histone H2A.Z-specific chaperone chz1">
    <location>
        <begin position="1"/>
        <end position="115"/>
    </location>
</feature>
<feature type="region of interest" description="Disordered" evidence="2">
    <location>
        <begin position="1"/>
        <end position="115"/>
    </location>
</feature>
<feature type="compositionally biased region" description="Polar residues" evidence="2">
    <location>
        <begin position="1"/>
        <end position="10"/>
    </location>
</feature>
<feature type="compositionally biased region" description="Low complexity" evidence="2">
    <location>
        <begin position="11"/>
        <end position="21"/>
    </location>
</feature>
<feature type="compositionally biased region" description="Basic and acidic residues" evidence="2">
    <location>
        <begin position="22"/>
        <end position="32"/>
    </location>
</feature>
<feature type="compositionally biased region" description="Acidic residues" evidence="2">
    <location>
        <begin position="39"/>
        <end position="62"/>
    </location>
</feature>
<feature type="compositionally biased region" description="Basic and acidic residues" evidence="2">
    <location>
        <begin position="82"/>
        <end position="95"/>
    </location>
</feature>
<feature type="compositionally biased region" description="Acidic residues" evidence="2">
    <location>
        <begin position="96"/>
        <end position="115"/>
    </location>
</feature>
<accession>A1CQS5</accession>
<reference key="1">
    <citation type="journal article" date="2008" name="PLoS Genet.">
        <title>Genomic islands in the pathogenic filamentous fungus Aspergillus fumigatus.</title>
        <authorList>
            <person name="Fedorova N.D."/>
            <person name="Khaldi N."/>
            <person name="Joardar V.S."/>
            <person name="Maiti R."/>
            <person name="Amedeo P."/>
            <person name="Anderson M.J."/>
            <person name="Crabtree J."/>
            <person name="Silva J.C."/>
            <person name="Badger J.H."/>
            <person name="Albarraq A."/>
            <person name="Angiuoli S."/>
            <person name="Bussey H."/>
            <person name="Bowyer P."/>
            <person name="Cotty P.J."/>
            <person name="Dyer P.S."/>
            <person name="Egan A."/>
            <person name="Galens K."/>
            <person name="Fraser-Liggett C.M."/>
            <person name="Haas B.J."/>
            <person name="Inman J.M."/>
            <person name="Kent R."/>
            <person name="Lemieux S."/>
            <person name="Malavazi I."/>
            <person name="Orvis J."/>
            <person name="Roemer T."/>
            <person name="Ronning C.M."/>
            <person name="Sundaram J.P."/>
            <person name="Sutton G."/>
            <person name="Turner G."/>
            <person name="Venter J.C."/>
            <person name="White O.R."/>
            <person name="Whitty B.R."/>
            <person name="Youngman P."/>
            <person name="Wolfe K.H."/>
            <person name="Goldman G.H."/>
            <person name="Wortman J.R."/>
            <person name="Jiang B."/>
            <person name="Denning D.W."/>
            <person name="Nierman W.C."/>
        </authorList>
    </citation>
    <scope>NUCLEOTIDE SEQUENCE [LARGE SCALE GENOMIC DNA]</scope>
    <source>
        <strain>ATCC 1007 / CBS 513.65 / DSM 816 / NCTC 3887 / NRRL 1 / QM 1276 / 107</strain>
    </source>
</reference>
<keyword id="KW-0143">Chaperone</keyword>
<keyword id="KW-0539">Nucleus</keyword>
<keyword id="KW-1185">Reference proteome</keyword>
<organism>
    <name type="scientific">Aspergillus clavatus (strain ATCC 1007 / CBS 513.65 / DSM 816 / NCTC 3887 / NRRL 1 / QM 1276 / 107)</name>
    <dbReference type="NCBI Taxonomy" id="344612"/>
    <lineage>
        <taxon>Eukaryota</taxon>
        <taxon>Fungi</taxon>
        <taxon>Dikarya</taxon>
        <taxon>Ascomycota</taxon>
        <taxon>Pezizomycotina</taxon>
        <taxon>Eurotiomycetes</taxon>
        <taxon>Eurotiomycetidae</taxon>
        <taxon>Eurotiales</taxon>
        <taxon>Aspergillaceae</taxon>
        <taxon>Aspergillus</taxon>
        <taxon>Aspergillus subgen. Fumigati</taxon>
    </lineage>
</organism>
<evidence type="ECO:0000250" key="1"/>
<evidence type="ECO:0000256" key="2">
    <source>
        <dbReference type="SAM" id="MobiDB-lite"/>
    </source>
</evidence>
<evidence type="ECO:0000305" key="3"/>
<protein>
    <recommendedName>
        <fullName>Histone H2A.Z-specific chaperone chz1</fullName>
    </recommendedName>
</protein>
<dbReference type="EMBL" id="DS027059">
    <property type="protein sequence ID" value="EAW07996.1"/>
    <property type="status" value="ALT_SEQ"/>
    <property type="molecule type" value="Genomic_DNA"/>
</dbReference>
<dbReference type="RefSeq" id="XP_001269422.1">
    <property type="nucleotide sequence ID" value="XM_001269421.1"/>
</dbReference>
<dbReference type="STRING" id="344612.A1CQS5"/>
<dbReference type="GeneID" id="4700886"/>
<dbReference type="KEGG" id="act:ACLA_027180"/>
<dbReference type="eggNOG" id="ENOG502SCUM">
    <property type="taxonomic scope" value="Eukaryota"/>
</dbReference>
<dbReference type="OrthoDB" id="4174291at2759"/>
<dbReference type="Proteomes" id="UP000006701">
    <property type="component" value="Unassembled WGS sequence"/>
</dbReference>
<dbReference type="GO" id="GO:0005634">
    <property type="term" value="C:nucleus"/>
    <property type="evidence" value="ECO:0007669"/>
    <property type="project" value="UniProtKB-SubCell"/>
</dbReference>
<dbReference type="InterPro" id="IPR019098">
    <property type="entry name" value="Histone_chaperone_domain_CHZ"/>
</dbReference>
<dbReference type="Pfam" id="PF09649">
    <property type="entry name" value="CHZ"/>
    <property type="match status" value="1"/>
</dbReference>
<dbReference type="SMART" id="SM01082">
    <property type="entry name" value="CHZ"/>
    <property type="match status" value="1"/>
</dbReference>
<comment type="function">
    <text evidence="1">Forms a chaperone-bound H2A.Z-H2B complex that acts as a source for SWR1 complex-dependent H2A to H2A.Z histone replacement in chromatin.</text>
</comment>
<comment type="subunit">
    <text evidence="1">Forms a heterotrimer with H2A.Z-H2B, stabilizing the association of the histone dimer. Also, with a lower affinity, forms a heterotrimer with H2A-H2B (By similarity).</text>
</comment>
<comment type="subcellular location">
    <subcellularLocation>
        <location evidence="1">Nucleus</location>
    </subcellularLocation>
</comment>
<comment type="similarity">
    <text evidence="3">Belongs to the CHZ1 family.</text>
</comment>
<comment type="sequence caution" evidence="3">
    <conflict type="erroneous gene model prediction">
        <sequence resource="EMBL-CDS" id="EAW07996"/>
    </conflict>
</comment>
<proteinExistence type="inferred from homology"/>
<sequence>MGDNNRATFSNDPAANAPDAAAVEKGKGKAVEEPALEMSMDEDEESEESEAEEIEDDEDDHDNLEPISQSNIIAGGRRTRGKTIDFQEAAEKLKDEMDEDDDDEDFEPNDNDMRN</sequence>
<name>CHZ1_ASPCL</name>
<gene>
    <name type="primary">chz1</name>
    <name type="ORF">ACLA_027180</name>
</gene>